<organism>
    <name type="scientific">Halorubrum lacusprofundi (strain ATCC 49239 / DSM 5036 / JCM 8891 / ACAM 34)</name>
    <dbReference type="NCBI Taxonomy" id="416348"/>
    <lineage>
        <taxon>Archaea</taxon>
        <taxon>Methanobacteriati</taxon>
        <taxon>Methanobacteriota</taxon>
        <taxon>Stenosarchaea group</taxon>
        <taxon>Halobacteria</taxon>
        <taxon>Halobacteriales</taxon>
        <taxon>Haloferacaceae</taxon>
        <taxon>Halorubrum</taxon>
    </lineage>
</organism>
<sequence length="214" mass="22479">MARVKICGLTRGADLRAAIDAGADAVGVISEVPVDSPREVDPATAAELLADVPPFVTATLVTMPDSAERAVELLRTICPDAIQLHGEWTPDEIRFIRAETERKVLLAVDADDPARAEEFDRVADALVIDSTDDSGAGGTGETHDWERAGDLADRLTSPVVLAGGLTADNVAEAVRAADPFAVDVASGVELTDGRKDHNAVARFVANAGREMELA</sequence>
<feature type="chain" id="PRO_1000197136" description="N-(5'-phosphoribosyl)anthranilate isomerase">
    <location>
        <begin position="1"/>
        <end position="214"/>
    </location>
</feature>
<protein>
    <recommendedName>
        <fullName evidence="1">N-(5'-phosphoribosyl)anthranilate isomerase</fullName>
        <shortName evidence="1">PRAI</shortName>
        <ecNumber evidence="1">5.3.1.24</ecNumber>
    </recommendedName>
</protein>
<comment type="catalytic activity">
    <reaction evidence="1">
        <text>N-(5-phospho-beta-D-ribosyl)anthranilate = 1-(2-carboxyphenylamino)-1-deoxy-D-ribulose 5-phosphate</text>
        <dbReference type="Rhea" id="RHEA:21540"/>
        <dbReference type="ChEBI" id="CHEBI:18277"/>
        <dbReference type="ChEBI" id="CHEBI:58613"/>
        <dbReference type="EC" id="5.3.1.24"/>
    </reaction>
</comment>
<comment type="pathway">
    <text evidence="1">Amino-acid biosynthesis; L-tryptophan biosynthesis; L-tryptophan from chorismate: step 3/5.</text>
</comment>
<comment type="similarity">
    <text evidence="1">Belongs to the TrpF family.</text>
</comment>
<dbReference type="EC" id="5.3.1.24" evidence="1"/>
<dbReference type="EMBL" id="CP001365">
    <property type="protein sequence ID" value="ACM57518.1"/>
    <property type="molecule type" value="Genomic_DNA"/>
</dbReference>
<dbReference type="RefSeq" id="WP_015910643.1">
    <property type="nucleotide sequence ID" value="NC_012029.1"/>
</dbReference>
<dbReference type="SMR" id="B9LQ97"/>
<dbReference type="GeneID" id="7399892"/>
<dbReference type="KEGG" id="hla:Hlac_1940"/>
<dbReference type="eggNOG" id="arCOG01983">
    <property type="taxonomic scope" value="Archaea"/>
</dbReference>
<dbReference type="HOGENOM" id="CLU_076364_2_1_2"/>
<dbReference type="UniPathway" id="UPA00035">
    <property type="reaction ID" value="UER00042"/>
</dbReference>
<dbReference type="Proteomes" id="UP000000740">
    <property type="component" value="Chromosome 1"/>
</dbReference>
<dbReference type="GO" id="GO:0004640">
    <property type="term" value="F:phosphoribosylanthranilate isomerase activity"/>
    <property type="evidence" value="ECO:0007669"/>
    <property type="project" value="UniProtKB-UniRule"/>
</dbReference>
<dbReference type="GO" id="GO:0000162">
    <property type="term" value="P:L-tryptophan biosynthetic process"/>
    <property type="evidence" value="ECO:0007669"/>
    <property type="project" value="UniProtKB-UniRule"/>
</dbReference>
<dbReference type="CDD" id="cd00405">
    <property type="entry name" value="PRAI"/>
    <property type="match status" value="1"/>
</dbReference>
<dbReference type="Gene3D" id="3.20.20.70">
    <property type="entry name" value="Aldolase class I"/>
    <property type="match status" value="1"/>
</dbReference>
<dbReference type="HAMAP" id="MF_00135">
    <property type="entry name" value="PRAI"/>
    <property type="match status" value="1"/>
</dbReference>
<dbReference type="InterPro" id="IPR013785">
    <property type="entry name" value="Aldolase_TIM"/>
</dbReference>
<dbReference type="InterPro" id="IPR001240">
    <property type="entry name" value="PRAI_dom"/>
</dbReference>
<dbReference type="InterPro" id="IPR011060">
    <property type="entry name" value="RibuloseP-bd_barrel"/>
</dbReference>
<dbReference type="InterPro" id="IPR044643">
    <property type="entry name" value="TrpF_fam"/>
</dbReference>
<dbReference type="PANTHER" id="PTHR42894">
    <property type="entry name" value="N-(5'-PHOSPHORIBOSYL)ANTHRANILATE ISOMERASE"/>
    <property type="match status" value="1"/>
</dbReference>
<dbReference type="PANTHER" id="PTHR42894:SF1">
    <property type="entry name" value="N-(5'-PHOSPHORIBOSYL)ANTHRANILATE ISOMERASE"/>
    <property type="match status" value="1"/>
</dbReference>
<dbReference type="Pfam" id="PF00697">
    <property type="entry name" value="PRAI"/>
    <property type="match status" value="1"/>
</dbReference>
<dbReference type="SUPFAM" id="SSF51366">
    <property type="entry name" value="Ribulose-phoshate binding barrel"/>
    <property type="match status" value="1"/>
</dbReference>
<evidence type="ECO:0000255" key="1">
    <source>
        <dbReference type="HAMAP-Rule" id="MF_00135"/>
    </source>
</evidence>
<gene>
    <name evidence="1" type="primary">trpF</name>
    <name type="ordered locus">Hlac_1940</name>
</gene>
<accession>B9LQ97</accession>
<reference key="1">
    <citation type="journal article" date="2016" name="Stand. Genomic Sci.">
        <title>Complete genome sequence of the Antarctic Halorubrum lacusprofundi type strain ACAM 34.</title>
        <authorList>
            <person name="Anderson I.J."/>
            <person name="DasSarma P."/>
            <person name="Lucas S."/>
            <person name="Copeland A."/>
            <person name="Lapidus A."/>
            <person name="Del Rio T.G."/>
            <person name="Tice H."/>
            <person name="Dalin E."/>
            <person name="Bruce D.C."/>
            <person name="Goodwin L."/>
            <person name="Pitluck S."/>
            <person name="Sims D."/>
            <person name="Brettin T.S."/>
            <person name="Detter J.C."/>
            <person name="Han C.S."/>
            <person name="Larimer F."/>
            <person name="Hauser L."/>
            <person name="Land M."/>
            <person name="Ivanova N."/>
            <person name="Richardson P."/>
            <person name="Cavicchioli R."/>
            <person name="DasSarma S."/>
            <person name="Woese C.R."/>
            <person name="Kyrpides N.C."/>
        </authorList>
    </citation>
    <scope>NUCLEOTIDE SEQUENCE [LARGE SCALE GENOMIC DNA]</scope>
    <source>
        <strain>ATCC 49239 / DSM 5036 / JCM 8891 / ACAM 34</strain>
    </source>
</reference>
<keyword id="KW-0028">Amino-acid biosynthesis</keyword>
<keyword id="KW-0057">Aromatic amino acid biosynthesis</keyword>
<keyword id="KW-0413">Isomerase</keyword>
<keyword id="KW-1185">Reference proteome</keyword>
<keyword id="KW-0822">Tryptophan biosynthesis</keyword>
<proteinExistence type="inferred from homology"/>
<name>TRPF_HALLT</name>